<comment type="function">
    <text evidence="1">Formation of pseudouridine at positions 38, 39 and 40 in the anticodon stem and loop of transfer RNAs.</text>
</comment>
<comment type="catalytic activity">
    <reaction evidence="1">
        <text>uridine(38/39/40) in tRNA = pseudouridine(38/39/40) in tRNA</text>
        <dbReference type="Rhea" id="RHEA:22376"/>
        <dbReference type="Rhea" id="RHEA-COMP:10085"/>
        <dbReference type="Rhea" id="RHEA-COMP:10087"/>
        <dbReference type="ChEBI" id="CHEBI:65314"/>
        <dbReference type="ChEBI" id="CHEBI:65315"/>
        <dbReference type="EC" id="5.4.99.12"/>
    </reaction>
</comment>
<comment type="subunit">
    <text evidence="1">Homodimer.</text>
</comment>
<comment type="similarity">
    <text evidence="1">Belongs to the tRNA pseudouridine synthase TruA family.</text>
</comment>
<accession>A5CET3</accession>
<reference key="1">
    <citation type="journal article" date="2007" name="Proc. Natl. Acad. Sci. U.S.A.">
        <title>The Orientia tsutsugamushi genome reveals massive proliferation of conjugative type IV secretion system and host-cell interaction genes.</title>
        <authorList>
            <person name="Cho N.-H."/>
            <person name="Kim H.-R."/>
            <person name="Lee J.-H."/>
            <person name="Kim S.-Y."/>
            <person name="Kim J."/>
            <person name="Cha S."/>
            <person name="Kim S.-Y."/>
            <person name="Darby A.C."/>
            <person name="Fuxelius H.-H."/>
            <person name="Yin J."/>
            <person name="Kim J.H."/>
            <person name="Kim J."/>
            <person name="Lee S.J."/>
            <person name="Koh Y.-S."/>
            <person name="Jang W.-J."/>
            <person name="Park K.-H."/>
            <person name="Andersson S.G.E."/>
            <person name="Choi M.-S."/>
            <person name="Kim I.-S."/>
        </authorList>
    </citation>
    <scope>NUCLEOTIDE SEQUENCE [LARGE SCALE GENOMIC DNA]</scope>
    <source>
        <strain>Boryong</strain>
    </source>
</reference>
<proteinExistence type="inferred from homology"/>
<gene>
    <name evidence="1" type="primary">truA</name>
    <name type="ordered locus">OTBS_1643</name>
</gene>
<dbReference type="EC" id="5.4.99.12" evidence="1"/>
<dbReference type="EMBL" id="AM494475">
    <property type="protein sequence ID" value="CAM80738.1"/>
    <property type="molecule type" value="Genomic_DNA"/>
</dbReference>
<dbReference type="RefSeq" id="WP_011944988.1">
    <property type="nucleotide sequence ID" value="NC_009488.1"/>
</dbReference>
<dbReference type="SMR" id="A5CET3"/>
<dbReference type="KEGG" id="ots:OTBS_1643"/>
<dbReference type="eggNOG" id="COG0101">
    <property type="taxonomic scope" value="Bacteria"/>
</dbReference>
<dbReference type="HOGENOM" id="CLU_014673_0_2_5"/>
<dbReference type="Proteomes" id="UP000001565">
    <property type="component" value="Chromosome"/>
</dbReference>
<dbReference type="GO" id="GO:0003723">
    <property type="term" value="F:RNA binding"/>
    <property type="evidence" value="ECO:0007669"/>
    <property type="project" value="InterPro"/>
</dbReference>
<dbReference type="GO" id="GO:0160147">
    <property type="term" value="F:tRNA pseudouridine(38-40) synthase activity"/>
    <property type="evidence" value="ECO:0007669"/>
    <property type="project" value="UniProtKB-EC"/>
</dbReference>
<dbReference type="GO" id="GO:0031119">
    <property type="term" value="P:tRNA pseudouridine synthesis"/>
    <property type="evidence" value="ECO:0007669"/>
    <property type="project" value="UniProtKB-UniRule"/>
</dbReference>
<dbReference type="CDD" id="cd02570">
    <property type="entry name" value="PseudoU_synth_EcTruA"/>
    <property type="match status" value="1"/>
</dbReference>
<dbReference type="Gene3D" id="3.30.70.660">
    <property type="entry name" value="Pseudouridine synthase I, catalytic domain, C-terminal subdomain"/>
    <property type="match status" value="1"/>
</dbReference>
<dbReference type="Gene3D" id="3.30.70.580">
    <property type="entry name" value="Pseudouridine synthase I, catalytic domain, N-terminal subdomain"/>
    <property type="match status" value="1"/>
</dbReference>
<dbReference type="HAMAP" id="MF_00171">
    <property type="entry name" value="TruA"/>
    <property type="match status" value="1"/>
</dbReference>
<dbReference type="InterPro" id="IPR020103">
    <property type="entry name" value="PsdUridine_synth_cat_dom_sf"/>
</dbReference>
<dbReference type="InterPro" id="IPR001406">
    <property type="entry name" value="PsdUridine_synth_TruA"/>
</dbReference>
<dbReference type="InterPro" id="IPR020097">
    <property type="entry name" value="PsdUridine_synth_TruA_a/b_dom"/>
</dbReference>
<dbReference type="InterPro" id="IPR020095">
    <property type="entry name" value="PsdUridine_synth_TruA_C"/>
</dbReference>
<dbReference type="InterPro" id="IPR020094">
    <property type="entry name" value="TruA/RsuA/RluB/E/F_N"/>
</dbReference>
<dbReference type="NCBIfam" id="TIGR00071">
    <property type="entry name" value="hisT_truA"/>
    <property type="match status" value="1"/>
</dbReference>
<dbReference type="PANTHER" id="PTHR11142">
    <property type="entry name" value="PSEUDOURIDYLATE SYNTHASE"/>
    <property type="match status" value="1"/>
</dbReference>
<dbReference type="PANTHER" id="PTHR11142:SF0">
    <property type="entry name" value="TRNA PSEUDOURIDINE SYNTHASE-LIKE 1"/>
    <property type="match status" value="1"/>
</dbReference>
<dbReference type="Pfam" id="PF01416">
    <property type="entry name" value="PseudoU_synth_1"/>
    <property type="match status" value="2"/>
</dbReference>
<dbReference type="PIRSF" id="PIRSF001430">
    <property type="entry name" value="tRNA_psdUrid_synth"/>
    <property type="match status" value="1"/>
</dbReference>
<dbReference type="SUPFAM" id="SSF55120">
    <property type="entry name" value="Pseudouridine synthase"/>
    <property type="match status" value="1"/>
</dbReference>
<evidence type="ECO:0000255" key="1">
    <source>
        <dbReference type="HAMAP-Rule" id="MF_00171"/>
    </source>
</evidence>
<organism>
    <name type="scientific">Orientia tsutsugamushi (strain Boryong)</name>
    <name type="common">Rickettsia tsutsugamushi</name>
    <dbReference type="NCBI Taxonomy" id="357244"/>
    <lineage>
        <taxon>Bacteria</taxon>
        <taxon>Pseudomonadati</taxon>
        <taxon>Pseudomonadota</taxon>
        <taxon>Alphaproteobacteria</taxon>
        <taxon>Rickettsiales</taxon>
        <taxon>Rickettsiaceae</taxon>
        <taxon>Rickettsieae</taxon>
        <taxon>Orientia</taxon>
    </lineage>
</organism>
<protein>
    <recommendedName>
        <fullName evidence="1">tRNA pseudouridine synthase A</fullName>
        <ecNumber evidence="1">5.4.99.12</ecNumber>
    </recommendedName>
    <alternativeName>
        <fullName evidence="1">tRNA pseudouridine(38-40) synthase</fullName>
    </alternativeName>
    <alternativeName>
        <fullName evidence="1">tRNA pseudouridylate synthase I</fullName>
    </alternativeName>
    <alternativeName>
        <fullName evidence="1">tRNA-uridine isomerase I</fullName>
    </alternativeName>
</protein>
<sequence length="284" mass="32127">MLRYKAIVEYDGTNFVGWQRQQNGLSIQQLLEDKISTFTKQTVNLIAAGRTDAGVHALGQVVHFDLIAPNNSKDLACINKETDNKEVSKQNNTTTTIDSLKKMLPCRYNAYKLMSAVNYLLKPHRIILTSCEITTLQFHARFSAKARHYKYRIINRTVPSVIEQNRTWWIKPPLNVIDMIDASQHLIGKHDFTSFRSSACQAKSPLKTLTKIEVDTTNYPEIQIYFSAPSFLHHMVRNIVGTLVYIGLCKISPAAIKTILFAKNRAMAGPTAPSSGLYFVKVDY</sequence>
<name>TRUA_ORITB</name>
<feature type="chain" id="PRO_1000017128" description="tRNA pseudouridine synthase A">
    <location>
        <begin position="1"/>
        <end position="284"/>
    </location>
</feature>
<feature type="active site" description="Nucleophile" evidence="1">
    <location>
        <position position="52"/>
    </location>
</feature>
<feature type="binding site" evidence="1">
    <location>
        <position position="149"/>
    </location>
    <ligand>
        <name>substrate</name>
    </ligand>
</feature>
<keyword id="KW-0413">Isomerase</keyword>
<keyword id="KW-1185">Reference proteome</keyword>
<keyword id="KW-0819">tRNA processing</keyword>